<reference key="1">
    <citation type="journal article" date="2009" name="Infect. Immun.">
        <title>Comparative genomics reveal extensive transposon-mediated genomic plasticity and diversity among potential effector proteins within the genus Coxiella.</title>
        <authorList>
            <person name="Beare P.A."/>
            <person name="Unsworth N."/>
            <person name="Andoh M."/>
            <person name="Voth D.E."/>
            <person name="Omsland A."/>
            <person name="Gilk S.D."/>
            <person name="Williams K.P."/>
            <person name="Sobral B.W."/>
            <person name="Kupko J.J. III"/>
            <person name="Porcella S.F."/>
            <person name="Samuel J.E."/>
            <person name="Heinzen R.A."/>
        </authorList>
    </citation>
    <scope>NUCLEOTIDE SEQUENCE [LARGE SCALE GENOMIC DNA]</scope>
    <source>
        <strain>CbuG_Q212</strain>
    </source>
</reference>
<proteinExistence type="inferred from homology"/>
<sequence>MEFRVIIPARFDSTRLPGKALVDIAGKPMIQHVYESAIKSGAEEVVIATDDKRIRQVAEDFGAVVCMTSSDHQSGTERIAEAAVALGFEDDEIIVCLQGDEPLIPPDAIRKLAEDLDEHDNVKVASLCTPITEVDELFNPHSTKVVLNRRNYALYFSHAPIPWGRDTFSDKENLQLNGSHYRHVGIYAYRVGFLEEYLSWDACPAEKMEALEQLRILWHGGRIHMVVAKSKCPPGVDTEEDLERVRAYF</sequence>
<comment type="function">
    <text evidence="1">Activates KDO (a required 8-carbon sugar) for incorporation into bacterial lipopolysaccharide in Gram-negative bacteria.</text>
</comment>
<comment type="catalytic activity">
    <reaction evidence="1">
        <text>3-deoxy-alpha-D-manno-oct-2-ulosonate + CTP = CMP-3-deoxy-beta-D-manno-octulosonate + diphosphate</text>
        <dbReference type="Rhea" id="RHEA:23448"/>
        <dbReference type="ChEBI" id="CHEBI:33019"/>
        <dbReference type="ChEBI" id="CHEBI:37563"/>
        <dbReference type="ChEBI" id="CHEBI:85986"/>
        <dbReference type="ChEBI" id="CHEBI:85987"/>
        <dbReference type="EC" id="2.7.7.38"/>
    </reaction>
</comment>
<comment type="pathway">
    <text evidence="1">Nucleotide-sugar biosynthesis; CMP-3-deoxy-D-manno-octulosonate biosynthesis; CMP-3-deoxy-D-manno-octulosonate from 3-deoxy-D-manno-octulosonate and CTP: step 1/1.</text>
</comment>
<comment type="pathway">
    <text evidence="1">Bacterial outer membrane biogenesis; lipopolysaccharide biosynthesis.</text>
</comment>
<comment type="subcellular location">
    <subcellularLocation>
        <location evidence="1">Cytoplasm</location>
    </subcellularLocation>
</comment>
<comment type="similarity">
    <text evidence="1">Belongs to the KdsB family.</text>
</comment>
<comment type="sequence caution" evidence="2">
    <conflict type="erroneous initiation">
        <sequence resource="EMBL-CDS" id="ACJ18828"/>
    </conflict>
</comment>
<feature type="chain" id="PRO_0000370052" description="3-deoxy-manno-octulosonate cytidylyltransferase">
    <location>
        <begin position="1"/>
        <end position="249"/>
    </location>
</feature>
<keyword id="KW-0963">Cytoplasm</keyword>
<keyword id="KW-0448">Lipopolysaccharide biosynthesis</keyword>
<keyword id="KW-0548">Nucleotidyltransferase</keyword>
<keyword id="KW-0808">Transferase</keyword>
<name>KDSB_COXB2</name>
<dbReference type="EC" id="2.7.7.38" evidence="1"/>
<dbReference type="EMBL" id="CP001019">
    <property type="protein sequence ID" value="ACJ18828.1"/>
    <property type="status" value="ALT_INIT"/>
    <property type="molecule type" value="Genomic_DNA"/>
</dbReference>
<dbReference type="SMR" id="B6J1K0"/>
<dbReference type="KEGG" id="cbg:CbuG_1534"/>
<dbReference type="HOGENOM" id="CLU_065038_1_0_6"/>
<dbReference type="UniPathway" id="UPA00030"/>
<dbReference type="UniPathway" id="UPA00358">
    <property type="reaction ID" value="UER00476"/>
</dbReference>
<dbReference type="GO" id="GO:0005829">
    <property type="term" value="C:cytosol"/>
    <property type="evidence" value="ECO:0007669"/>
    <property type="project" value="TreeGrafter"/>
</dbReference>
<dbReference type="GO" id="GO:0008690">
    <property type="term" value="F:3-deoxy-manno-octulosonate cytidylyltransferase activity"/>
    <property type="evidence" value="ECO:0007669"/>
    <property type="project" value="UniProtKB-UniRule"/>
</dbReference>
<dbReference type="GO" id="GO:0033468">
    <property type="term" value="P:CMP-keto-3-deoxy-D-manno-octulosonic acid biosynthetic process"/>
    <property type="evidence" value="ECO:0007669"/>
    <property type="project" value="UniProtKB-UniRule"/>
</dbReference>
<dbReference type="GO" id="GO:0009103">
    <property type="term" value="P:lipopolysaccharide biosynthetic process"/>
    <property type="evidence" value="ECO:0007669"/>
    <property type="project" value="UniProtKB-UniRule"/>
</dbReference>
<dbReference type="CDD" id="cd02517">
    <property type="entry name" value="CMP-KDO-Synthetase"/>
    <property type="match status" value="1"/>
</dbReference>
<dbReference type="FunFam" id="3.90.550.10:FF:000011">
    <property type="entry name" value="3-deoxy-manno-octulosonate cytidylyltransferase"/>
    <property type="match status" value="1"/>
</dbReference>
<dbReference type="Gene3D" id="3.90.550.10">
    <property type="entry name" value="Spore Coat Polysaccharide Biosynthesis Protein SpsA, Chain A"/>
    <property type="match status" value="1"/>
</dbReference>
<dbReference type="HAMAP" id="MF_00057">
    <property type="entry name" value="KdsB"/>
    <property type="match status" value="1"/>
</dbReference>
<dbReference type="InterPro" id="IPR003329">
    <property type="entry name" value="Cytidylyl_trans"/>
</dbReference>
<dbReference type="InterPro" id="IPR004528">
    <property type="entry name" value="KdsB"/>
</dbReference>
<dbReference type="InterPro" id="IPR029044">
    <property type="entry name" value="Nucleotide-diphossugar_trans"/>
</dbReference>
<dbReference type="NCBIfam" id="TIGR00466">
    <property type="entry name" value="kdsB"/>
    <property type="match status" value="1"/>
</dbReference>
<dbReference type="NCBIfam" id="NF003950">
    <property type="entry name" value="PRK05450.1-3"/>
    <property type="match status" value="1"/>
</dbReference>
<dbReference type="NCBIfam" id="NF003952">
    <property type="entry name" value="PRK05450.1-5"/>
    <property type="match status" value="1"/>
</dbReference>
<dbReference type="NCBIfam" id="NF009905">
    <property type="entry name" value="PRK13368.1"/>
    <property type="match status" value="1"/>
</dbReference>
<dbReference type="PANTHER" id="PTHR42866">
    <property type="entry name" value="3-DEOXY-MANNO-OCTULOSONATE CYTIDYLYLTRANSFERASE"/>
    <property type="match status" value="1"/>
</dbReference>
<dbReference type="PANTHER" id="PTHR42866:SF2">
    <property type="entry name" value="3-DEOXY-MANNO-OCTULOSONATE CYTIDYLYLTRANSFERASE, MITOCHONDRIAL"/>
    <property type="match status" value="1"/>
</dbReference>
<dbReference type="Pfam" id="PF02348">
    <property type="entry name" value="CTP_transf_3"/>
    <property type="match status" value="1"/>
</dbReference>
<dbReference type="SUPFAM" id="SSF53448">
    <property type="entry name" value="Nucleotide-diphospho-sugar transferases"/>
    <property type="match status" value="1"/>
</dbReference>
<protein>
    <recommendedName>
        <fullName evidence="1">3-deoxy-manno-octulosonate cytidylyltransferase</fullName>
        <ecNumber evidence="1">2.7.7.38</ecNumber>
    </recommendedName>
    <alternativeName>
        <fullName evidence="1">CMP-2-keto-3-deoxyoctulosonic acid synthase</fullName>
        <shortName evidence="1">CKS</shortName>
        <shortName evidence="1">CMP-KDO synthase</shortName>
    </alternativeName>
</protein>
<organism>
    <name type="scientific">Coxiella burnetii (strain CbuG_Q212)</name>
    <name type="common">Coxiella burnetii (strain Q212)</name>
    <dbReference type="NCBI Taxonomy" id="434923"/>
    <lineage>
        <taxon>Bacteria</taxon>
        <taxon>Pseudomonadati</taxon>
        <taxon>Pseudomonadota</taxon>
        <taxon>Gammaproteobacteria</taxon>
        <taxon>Legionellales</taxon>
        <taxon>Coxiellaceae</taxon>
        <taxon>Coxiella</taxon>
    </lineage>
</organism>
<gene>
    <name evidence="1" type="primary">kdsB</name>
    <name type="ordered locus">CbuG_1534</name>
</gene>
<evidence type="ECO:0000255" key="1">
    <source>
        <dbReference type="HAMAP-Rule" id="MF_00057"/>
    </source>
</evidence>
<evidence type="ECO:0000305" key="2"/>
<accession>B6J1K0</accession>